<proteinExistence type="inferred from homology"/>
<feature type="chain" id="PRO_0000170281" description="Large ribosomal subunit protein bL33c">
    <location>
        <begin position="1"/>
        <end position="66"/>
    </location>
</feature>
<geneLocation type="non-photosynthetic plastid"/>
<keyword id="KW-0934">Plastid</keyword>
<keyword id="KW-0687">Ribonucleoprotein</keyword>
<keyword id="KW-0689">Ribosomal protein</keyword>
<evidence type="ECO:0000305" key="1"/>
<reference key="1">
    <citation type="journal article" date="1992" name="Proc. Natl. Acad. Sci. U.S.A.">
        <title>Function and evolution of a minimal plastid genome from a nonphotosynthetic parasitic plant.</title>
        <authorList>
            <person name="Wolfe K.H."/>
            <person name="Morden C.W."/>
            <person name="Palmer J.D."/>
        </authorList>
    </citation>
    <scope>NUCLEOTIDE SEQUENCE [LARGE SCALE GENOMIC DNA]</scope>
</reference>
<reference key="2">
    <citation type="journal article" date="1992" name="J. Mol. Evol.">
        <title>Rapid evolution of the plastid translational apparatus in a nonphotosynthetic plant: loss or accelerated sequence evolution of tRNA and ribosomal protein genes.</title>
        <authorList>
            <person name="Wolfe K.H."/>
            <person name="Morden C.W."/>
            <person name="Ems S.C."/>
            <person name="Palmer J.D."/>
        </authorList>
    </citation>
    <scope>NUCLEOTIDE SEQUENCE [GENOMIC DNA]</scope>
</reference>
<sequence>MAKSKDARVAVILECTSCIRNSVNKVLTGISRYITQKNRRNTPNRLELRKFCPYCYKHMIHGEIKK</sequence>
<organism>
    <name type="scientific">Epifagus virginiana</name>
    <name type="common">Beechdrops</name>
    <name type="synonym">Orobanche virginiana</name>
    <dbReference type="NCBI Taxonomy" id="4177"/>
    <lineage>
        <taxon>Eukaryota</taxon>
        <taxon>Viridiplantae</taxon>
        <taxon>Streptophyta</taxon>
        <taxon>Embryophyta</taxon>
        <taxon>Tracheophyta</taxon>
        <taxon>Spermatophyta</taxon>
        <taxon>Magnoliopsida</taxon>
        <taxon>eudicotyledons</taxon>
        <taxon>Gunneridae</taxon>
        <taxon>Pentapetalae</taxon>
        <taxon>asterids</taxon>
        <taxon>lamiids</taxon>
        <taxon>Lamiales</taxon>
        <taxon>Orobanchaceae</taxon>
        <taxon>Orobancheae</taxon>
        <taxon>Epifagus</taxon>
    </lineage>
</organism>
<protein>
    <recommendedName>
        <fullName evidence="1">Large ribosomal subunit protein bL33c</fullName>
    </recommendedName>
    <alternativeName>
        <fullName>50S ribosomal protein L33, plastid</fullName>
    </alternativeName>
</protein>
<comment type="subcellular location">
    <subcellularLocation>
        <location>Plastid</location>
    </subcellularLocation>
</comment>
<comment type="similarity">
    <text evidence="1">Belongs to the bacterial ribosomal protein bL33 family.</text>
</comment>
<gene>
    <name type="primary">rpl33</name>
</gene>
<name>RK33_EPIVI</name>
<accession>P30068</accession>
<dbReference type="EMBL" id="M81884">
    <property type="protein sequence ID" value="AAA65855.1"/>
    <property type="molecule type" value="Genomic_DNA"/>
</dbReference>
<dbReference type="PIR" id="S78385">
    <property type="entry name" value="S78385"/>
</dbReference>
<dbReference type="RefSeq" id="NP_054381.1">
    <property type="nucleotide sequence ID" value="NC_001568.1"/>
</dbReference>
<dbReference type="GeneID" id="801403"/>
<dbReference type="GO" id="GO:0009536">
    <property type="term" value="C:plastid"/>
    <property type="evidence" value="ECO:0007669"/>
    <property type="project" value="UniProtKB-SubCell"/>
</dbReference>
<dbReference type="GO" id="GO:1990904">
    <property type="term" value="C:ribonucleoprotein complex"/>
    <property type="evidence" value="ECO:0007669"/>
    <property type="project" value="UniProtKB-KW"/>
</dbReference>
<dbReference type="GO" id="GO:0005840">
    <property type="term" value="C:ribosome"/>
    <property type="evidence" value="ECO:0007669"/>
    <property type="project" value="UniProtKB-KW"/>
</dbReference>
<dbReference type="GO" id="GO:0003735">
    <property type="term" value="F:structural constituent of ribosome"/>
    <property type="evidence" value="ECO:0007669"/>
    <property type="project" value="InterPro"/>
</dbReference>
<dbReference type="GO" id="GO:0006412">
    <property type="term" value="P:translation"/>
    <property type="evidence" value="ECO:0007669"/>
    <property type="project" value="InterPro"/>
</dbReference>
<dbReference type="Gene3D" id="2.20.28.120">
    <property type="entry name" value="Ribosomal protein L33"/>
    <property type="match status" value="1"/>
</dbReference>
<dbReference type="HAMAP" id="MF_00294">
    <property type="entry name" value="Ribosomal_bL33"/>
    <property type="match status" value="1"/>
</dbReference>
<dbReference type="InterPro" id="IPR001705">
    <property type="entry name" value="Ribosomal_bL33"/>
</dbReference>
<dbReference type="InterPro" id="IPR018264">
    <property type="entry name" value="Ribosomal_bL33_CS"/>
</dbReference>
<dbReference type="InterPro" id="IPR038584">
    <property type="entry name" value="Ribosomal_bL33_sf"/>
</dbReference>
<dbReference type="InterPro" id="IPR011332">
    <property type="entry name" value="Ribosomal_zn-bd"/>
</dbReference>
<dbReference type="NCBIfam" id="NF001764">
    <property type="entry name" value="PRK00504.1"/>
    <property type="match status" value="1"/>
</dbReference>
<dbReference type="NCBIfam" id="NF001860">
    <property type="entry name" value="PRK00595.1"/>
    <property type="match status" value="1"/>
</dbReference>
<dbReference type="NCBIfam" id="TIGR01023">
    <property type="entry name" value="rpmG_bact"/>
    <property type="match status" value="1"/>
</dbReference>
<dbReference type="PANTHER" id="PTHR43168">
    <property type="entry name" value="50S RIBOSOMAL PROTEIN L33, CHLOROPLASTIC"/>
    <property type="match status" value="1"/>
</dbReference>
<dbReference type="PANTHER" id="PTHR43168:SF2">
    <property type="entry name" value="LARGE RIBOSOMAL SUBUNIT PROTEIN BL33C"/>
    <property type="match status" value="1"/>
</dbReference>
<dbReference type="Pfam" id="PF00471">
    <property type="entry name" value="Ribosomal_L33"/>
    <property type="match status" value="1"/>
</dbReference>
<dbReference type="SUPFAM" id="SSF57829">
    <property type="entry name" value="Zn-binding ribosomal proteins"/>
    <property type="match status" value="1"/>
</dbReference>
<dbReference type="PROSITE" id="PS00582">
    <property type="entry name" value="RIBOSOMAL_L33"/>
    <property type="match status" value="1"/>
</dbReference>